<name>RS18_SINFN</name>
<evidence type="ECO:0000255" key="1">
    <source>
        <dbReference type="HAMAP-Rule" id="MF_00270"/>
    </source>
</evidence>
<evidence type="ECO:0000305" key="2"/>
<proteinExistence type="inferred from homology"/>
<gene>
    <name evidence="1" type="primary">rpsR</name>
    <name type="ordered locus">NGR_c08860</name>
</gene>
<feature type="chain" id="PRO_1000196525" description="Small ribosomal subunit protein bS18">
    <location>
        <begin position="1"/>
        <end position="82"/>
    </location>
</feature>
<keyword id="KW-1185">Reference proteome</keyword>
<keyword id="KW-0687">Ribonucleoprotein</keyword>
<keyword id="KW-0689">Ribosomal protein</keyword>
<keyword id="KW-0694">RNA-binding</keyword>
<keyword id="KW-0699">rRNA-binding</keyword>
<sequence>MAEVSSAPVRRPFHRRRKTCPFSGANAPRIDYKDVRLLQRYISERGKIVPSRITAVSQKKQRELAQAIKRARFLGLLPYVVS</sequence>
<protein>
    <recommendedName>
        <fullName evidence="1">Small ribosomal subunit protein bS18</fullName>
    </recommendedName>
    <alternativeName>
        <fullName evidence="2">30S ribosomal protein S18</fullName>
    </alternativeName>
</protein>
<accession>C3M9B0</accession>
<organism>
    <name type="scientific">Sinorhizobium fredii (strain NBRC 101917 / NGR234)</name>
    <dbReference type="NCBI Taxonomy" id="394"/>
    <lineage>
        <taxon>Bacteria</taxon>
        <taxon>Pseudomonadati</taxon>
        <taxon>Pseudomonadota</taxon>
        <taxon>Alphaproteobacteria</taxon>
        <taxon>Hyphomicrobiales</taxon>
        <taxon>Rhizobiaceae</taxon>
        <taxon>Sinorhizobium/Ensifer group</taxon>
        <taxon>Sinorhizobium</taxon>
    </lineage>
</organism>
<comment type="function">
    <text evidence="1">Binds as a heterodimer with protein bS6 to the central domain of the 16S rRNA, where it helps stabilize the platform of the 30S subunit.</text>
</comment>
<comment type="subunit">
    <text evidence="1">Part of the 30S ribosomal subunit. Forms a tight heterodimer with protein bS6.</text>
</comment>
<comment type="similarity">
    <text evidence="1">Belongs to the bacterial ribosomal protein bS18 family.</text>
</comment>
<dbReference type="EMBL" id="CP001389">
    <property type="protein sequence ID" value="ACP24676.1"/>
    <property type="molecule type" value="Genomic_DNA"/>
</dbReference>
<dbReference type="RefSeq" id="WP_012707461.1">
    <property type="nucleotide sequence ID" value="NC_012587.1"/>
</dbReference>
<dbReference type="RefSeq" id="YP_002825429.1">
    <property type="nucleotide sequence ID" value="NC_012587.1"/>
</dbReference>
<dbReference type="SMR" id="C3M9B0"/>
<dbReference type="STRING" id="394.NGR_c08860"/>
<dbReference type="GeneID" id="48972417"/>
<dbReference type="KEGG" id="rhi:NGR_c08860"/>
<dbReference type="PATRIC" id="fig|394.7.peg.3702"/>
<dbReference type="eggNOG" id="COG0238">
    <property type="taxonomic scope" value="Bacteria"/>
</dbReference>
<dbReference type="HOGENOM" id="CLU_148710_2_2_5"/>
<dbReference type="OrthoDB" id="9812008at2"/>
<dbReference type="Proteomes" id="UP000001054">
    <property type="component" value="Chromosome"/>
</dbReference>
<dbReference type="GO" id="GO:0022627">
    <property type="term" value="C:cytosolic small ribosomal subunit"/>
    <property type="evidence" value="ECO:0007669"/>
    <property type="project" value="TreeGrafter"/>
</dbReference>
<dbReference type="GO" id="GO:0070181">
    <property type="term" value="F:small ribosomal subunit rRNA binding"/>
    <property type="evidence" value="ECO:0007669"/>
    <property type="project" value="TreeGrafter"/>
</dbReference>
<dbReference type="GO" id="GO:0003735">
    <property type="term" value="F:structural constituent of ribosome"/>
    <property type="evidence" value="ECO:0007669"/>
    <property type="project" value="InterPro"/>
</dbReference>
<dbReference type="GO" id="GO:0006412">
    <property type="term" value="P:translation"/>
    <property type="evidence" value="ECO:0007669"/>
    <property type="project" value="UniProtKB-UniRule"/>
</dbReference>
<dbReference type="Gene3D" id="4.10.640.10">
    <property type="entry name" value="Ribosomal protein S18"/>
    <property type="match status" value="1"/>
</dbReference>
<dbReference type="HAMAP" id="MF_00270">
    <property type="entry name" value="Ribosomal_bS18"/>
    <property type="match status" value="1"/>
</dbReference>
<dbReference type="InterPro" id="IPR001648">
    <property type="entry name" value="Ribosomal_bS18"/>
</dbReference>
<dbReference type="InterPro" id="IPR018275">
    <property type="entry name" value="Ribosomal_bS18_CS"/>
</dbReference>
<dbReference type="InterPro" id="IPR036870">
    <property type="entry name" value="Ribosomal_bS18_sf"/>
</dbReference>
<dbReference type="NCBIfam" id="TIGR00165">
    <property type="entry name" value="S18"/>
    <property type="match status" value="1"/>
</dbReference>
<dbReference type="PANTHER" id="PTHR13479">
    <property type="entry name" value="30S RIBOSOMAL PROTEIN S18"/>
    <property type="match status" value="1"/>
</dbReference>
<dbReference type="PANTHER" id="PTHR13479:SF40">
    <property type="entry name" value="SMALL RIBOSOMAL SUBUNIT PROTEIN BS18M"/>
    <property type="match status" value="1"/>
</dbReference>
<dbReference type="Pfam" id="PF01084">
    <property type="entry name" value="Ribosomal_S18"/>
    <property type="match status" value="1"/>
</dbReference>
<dbReference type="PRINTS" id="PR00974">
    <property type="entry name" value="RIBOSOMALS18"/>
</dbReference>
<dbReference type="SUPFAM" id="SSF46911">
    <property type="entry name" value="Ribosomal protein S18"/>
    <property type="match status" value="1"/>
</dbReference>
<dbReference type="PROSITE" id="PS00057">
    <property type="entry name" value="RIBOSOMAL_S18"/>
    <property type="match status" value="1"/>
</dbReference>
<reference key="1">
    <citation type="journal article" date="2009" name="Appl. Environ. Microbiol.">
        <title>Rhizobium sp. strain NGR234 possesses a remarkable number of secretion systems.</title>
        <authorList>
            <person name="Schmeisser C."/>
            <person name="Liesegang H."/>
            <person name="Krysciak D."/>
            <person name="Bakkou N."/>
            <person name="Le Quere A."/>
            <person name="Wollherr A."/>
            <person name="Heinemeyer I."/>
            <person name="Morgenstern B."/>
            <person name="Pommerening-Roeser A."/>
            <person name="Flores M."/>
            <person name="Palacios R."/>
            <person name="Brenner S."/>
            <person name="Gottschalk G."/>
            <person name="Schmitz R.A."/>
            <person name="Broughton W.J."/>
            <person name="Perret X."/>
            <person name="Strittmatter A.W."/>
            <person name="Streit W.R."/>
        </authorList>
    </citation>
    <scope>NUCLEOTIDE SEQUENCE [LARGE SCALE GENOMIC DNA]</scope>
    <source>
        <strain>NBRC 101917 / NGR234</strain>
    </source>
</reference>